<keyword id="KW-0117">Actin capping</keyword>
<keyword id="KW-0009">Actin-binding</keyword>
<keyword id="KW-0025">Alternative splicing</keyword>
<keyword id="KW-1185">Reference proteome</keyword>
<proteinExistence type="evidence at transcript level"/>
<sequence>MADEEDELLETELSYDQKKEIAKWFFLNAPAGEINYVAKDLKAVLSDEEVYNEAAMEAFPVYNKTHMICLEMPSGAGDVIVSSYSEINENEYLDPRTAQVAIVDHVKQICTKVRPANDEELPSLYIEEYRYALDAEIQRYVSESYPKGMSAVNCVKGKDNEGPGSDFELVVIITAMRLSPQNFCNGSWRSVWNIDFQDESQVLDIKGKLQVGAHYFEEGNVELDAKKDFQDSTIFQSADDCAIAIANIIRHHETEYLASLEVAYSKLPDNTFKDLRRKLPVTRTLFPWQNTLQFSLTREVEKELGLGK</sequence>
<accession>O82631</accession>
<accession>Q9MA66</accession>
<organism>
    <name type="scientific">Arabidopsis thaliana</name>
    <name type="common">Mouse-ear cress</name>
    <dbReference type="NCBI Taxonomy" id="3702"/>
    <lineage>
        <taxon>Eukaryota</taxon>
        <taxon>Viridiplantae</taxon>
        <taxon>Streptophyta</taxon>
        <taxon>Embryophyta</taxon>
        <taxon>Tracheophyta</taxon>
        <taxon>Spermatophyta</taxon>
        <taxon>Magnoliopsida</taxon>
        <taxon>eudicotyledons</taxon>
        <taxon>Gunneridae</taxon>
        <taxon>Pentapetalae</taxon>
        <taxon>rosids</taxon>
        <taxon>malvids</taxon>
        <taxon>Brassicales</taxon>
        <taxon>Brassicaceae</taxon>
        <taxon>Camelineae</taxon>
        <taxon>Arabidopsis</taxon>
    </lineage>
</organism>
<dbReference type="EMBL" id="AJ001855">
    <property type="protein sequence ID" value="CAA05054.1"/>
    <property type="molecule type" value="mRNA"/>
</dbReference>
<dbReference type="EMBL" id="AC009606">
    <property type="protein sequence ID" value="AAF64531.1"/>
    <property type="molecule type" value="Genomic_DNA"/>
</dbReference>
<dbReference type="EMBL" id="CP002686">
    <property type="protein sequence ID" value="AEE74252.1"/>
    <property type="molecule type" value="Genomic_DNA"/>
</dbReference>
<dbReference type="PIR" id="T51820">
    <property type="entry name" value="T51820"/>
</dbReference>
<dbReference type="RefSeq" id="NP_187203.1">
    <molecule id="O82631-1"/>
    <property type="nucleotide sequence ID" value="NM_111425.5"/>
</dbReference>
<dbReference type="SMR" id="O82631"/>
<dbReference type="FunCoup" id="O82631">
    <property type="interactions" value="3376"/>
</dbReference>
<dbReference type="STRING" id="3702.O82631"/>
<dbReference type="iPTMnet" id="O82631"/>
<dbReference type="PaxDb" id="3702-AT3G05520.2"/>
<dbReference type="EnsemblPlants" id="AT3G05520.1">
    <molecule id="O82631-1"/>
    <property type="protein sequence ID" value="AT3G05520.1"/>
    <property type="gene ID" value="AT3G05520"/>
</dbReference>
<dbReference type="Gramene" id="AT3G05520.1">
    <molecule id="O82631-1"/>
    <property type="protein sequence ID" value="AT3G05520.1"/>
    <property type="gene ID" value="AT3G05520"/>
</dbReference>
<dbReference type="KEGG" id="ath:AT3G05520"/>
<dbReference type="Araport" id="AT3G05520"/>
<dbReference type="TAIR" id="AT3G05520">
    <property type="gene designation" value="CPA"/>
</dbReference>
<dbReference type="eggNOG" id="KOG0836">
    <property type="taxonomic scope" value="Eukaryota"/>
</dbReference>
<dbReference type="InParanoid" id="O82631"/>
<dbReference type="PhylomeDB" id="O82631"/>
<dbReference type="PRO" id="PR:O82631"/>
<dbReference type="Proteomes" id="UP000006548">
    <property type="component" value="Chromosome 3"/>
</dbReference>
<dbReference type="ExpressionAtlas" id="O82631">
    <property type="expression patterns" value="baseline and differential"/>
</dbReference>
<dbReference type="GO" id="GO:0008290">
    <property type="term" value="C:F-actin capping protein complex"/>
    <property type="evidence" value="ECO:0007669"/>
    <property type="project" value="InterPro"/>
</dbReference>
<dbReference type="GO" id="GO:0003779">
    <property type="term" value="F:actin binding"/>
    <property type="evidence" value="ECO:0007669"/>
    <property type="project" value="UniProtKB-KW"/>
</dbReference>
<dbReference type="GO" id="GO:0051016">
    <property type="term" value="P:barbed-end actin filament capping"/>
    <property type="evidence" value="ECO:0007669"/>
    <property type="project" value="InterPro"/>
</dbReference>
<dbReference type="FunFam" id="3.30.1140.60:FF:000003">
    <property type="entry name" value="F-actin-capping protein subunit alpha"/>
    <property type="match status" value="1"/>
</dbReference>
<dbReference type="FunFam" id="3.90.1150.210:FF:000003">
    <property type="entry name" value="F-actin-capping protein subunit alpha"/>
    <property type="match status" value="1"/>
</dbReference>
<dbReference type="Gene3D" id="3.30.1140.60">
    <property type="entry name" value="F-actin capping protein, alpha subunit"/>
    <property type="match status" value="1"/>
</dbReference>
<dbReference type="Gene3D" id="3.90.1150.210">
    <property type="entry name" value="F-actin capping protein, beta subunit"/>
    <property type="match status" value="1"/>
</dbReference>
<dbReference type="InterPro" id="IPR002189">
    <property type="entry name" value="CapZ_alpha"/>
</dbReference>
<dbReference type="InterPro" id="IPR037282">
    <property type="entry name" value="CapZ_alpha/beta"/>
</dbReference>
<dbReference type="InterPro" id="IPR042276">
    <property type="entry name" value="CapZ_alpha/beta_2"/>
</dbReference>
<dbReference type="InterPro" id="IPR042489">
    <property type="entry name" value="CapZ_alpha_1"/>
</dbReference>
<dbReference type="InterPro" id="IPR017865">
    <property type="entry name" value="F-actin_cap_asu_CS"/>
</dbReference>
<dbReference type="PANTHER" id="PTHR10653">
    <property type="entry name" value="F-ACTIN-CAPPING PROTEIN SUBUNIT ALPHA"/>
    <property type="match status" value="1"/>
</dbReference>
<dbReference type="PANTHER" id="PTHR10653:SF0">
    <property type="entry name" value="F-ACTIN-CAPPING PROTEIN SUBUNIT ALPHA"/>
    <property type="match status" value="1"/>
</dbReference>
<dbReference type="Pfam" id="PF01267">
    <property type="entry name" value="F-actin_cap_A"/>
    <property type="match status" value="1"/>
</dbReference>
<dbReference type="PRINTS" id="PR00191">
    <property type="entry name" value="FACTINCAPA"/>
</dbReference>
<dbReference type="SUPFAM" id="SSF90096">
    <property type="entry name" value="Subunits of heterodimeric actin filament capping protein Capz"/>
    <property type="match status" value="1"/>
</dbReference>
<dbReference type="PROSITE" id="PS00748">
    <property type="entry name" value="F_ACTIN_CAPPING_A_1"/>
    <property type="match status" value="1"/>
</dbReference>
<dbReference type="PROSITE" id="PS00749">
    <property type="entry name" value="F_ACTIN_CAPPING_A_2"/>
    <property type="match status" value="1"/>
</dbReference>
<reference key="1">
    <citation type="submission" date="1997-10" db="EMBL/GenBank/DDBJ databases">
        <title>Characterization of Arabidopsis thaliana CapZ proteins.</title>
        <authorList>
            <person name="Klein M."/>
            <person name="Mueller-Roeber B."/>
        </authorList>
    </citation>
    <scope>NUCLEOTIDE SEQUENCE [MRNA]</scope>
    <source>
        <strain>cv. Columbia</strain>
    </source>
</reference>
<reference key="2">
    <citation type="journal article" date="2000" name="Nature">
        <title>Sequence and analysis of chromosome 3 of the plant Arabidopsis thaliana.</title>
        <authorList>
            <person name="Salanoubat M."/>
            <person name="Lemcke K."/>
            <person name="Rieger M."/>
            <person name="Ansorge W."/>
            <person name="Unseld M."/>
            <person name="Fartmann B."/>
            <person name="Valle G."/>
            <person name="Bloecker H."/>
            <person name="Perez-Alonso M."/>
            <person name="Obermaier B."/>
            <person name="Delseny M."/>
            <person name="Boutry M."/>
            <person name="Grivell L.A."/>
            <person name="Mache R."/>
            <person name="Puigdomenech P."/>
            <person name="De Simone V."/>
            <person name="Choisne N."/>
            <person name="Artiguenave F."/>
            <person name="Robert C."/>
            <person name="Brottier P."/>
            <person name="Wincker P."/>
            <person name="Cattolico L."/>
            <person name="Weissenbach J."/>
            <person name="Saurin W."/>
            <person name="Quetier F."/>
            <person name="Schaefer M."/>
            <person name="Mueller-Auer S."/>
            <person name="Gabel C."/>
            <person name="Fuchs M."/>
            <person name="Benes V."/>
            <person name="Wurmbach E."/>
            <person name="Drzonek H."/>
            <person name="Erfle H."/>
            <person name="Jordan N."/>
            <person name="Bangert S."/>
            <person name="Wiedelmann R."/>
            <person name="Kranz H."/>
            <person name="Voss H."/>
            <person name="Holland R."/>
            <person name="Brandt P."/>
            <person name="Nyakatura G."/>
            <person name="Vezzi A."/>
            <person name="D'Angelo M."/>
            <person name="Pallavicini A."/>
            <person name="Toppo S."/>
            <person name="Simionati B."/>
            <person name="Conrad A."/>
            <person name="Hornischer K."/>
            <person name="Kauer G."/>
            <person name="Loehnert T.-H."/>
            <person name="Nordsiek G."/>
            <person name="Reichelt J."/>
            <person name="Scharfe M."/>
            <person name="Schoen O."/>
            <person name="Bargues M."/>
            <person name="Terol J."/>
            <person name="Climent J."/>
            <person name="Navarro P."/>
            <person name="Collado C."/>
            <person name="Perez-Perez A."/>
            <person name="Ottenwaelder B."/>
            <person name="Duchemin D."/>
            <person name="Cooke R."/>
            <person name="Laudie M."/>
            <person name="Berger-Llauro C."/>
            <person name="Purnelle B."/>
            <person name="Masuy D."/>
            <person name="de Haan M."/>
            <person name="Maarse A.C."/>
            <person name="Alcaraz J.-P."/>
            <person name="Cottet A."/>
            <person name="Casacuberta E."/>
            <person name="Monfort A."/>
            <person name="Argiriou A."/>
            <person name="Flores M."/>
            <person name="Liguori R."/>
            <person name="Vitale D."/>
            <person name="Mannhaupt G."/>
            <person name="Haase D."/>
            <person name="Schoof H."/>
            <person name="Rudd S."/>
            <person name="Zaccaria P."/>
            <person name="Mewes H.-W."/>
            <person name="Mayer K.F.X."/>
            <person name="Kaul S."/>
            <person name="Town C.D."/>
            <person name="Koo H.L."/>
            <person name="Tallon L.J."/>
            <person name="Jenkins J."/>
            <person name="Rooney T."/>
            <person name="Rizzo M."/>
            <person name="Walts A."/>
            <person name="Utterback T."/>
            <person name="Fujii C.Y."/>
            <person name="Shea T.P."/>
            <person name="Creasy T.H."/>
            <person name="Haas B."/>
            <person name="Maiti R."/>
            <person name="Wu D."/>
            <person name="Peterson J."/>
            <person name="Van Aken S."/>
            <person name="Pai G."/>
            <person name="Militscher J."/>
            <person name="Sellers P."/>
            <person name="Gill J.E."/>
            <person name="Feldblyum T.V."/>
            <person name="Preuss D."/>
            <person name="Lin X."/>
            <person name="Nierman W.C."/>
            <person name="Salzberg S.L."/>
            <person name="White O."/>
            <person name="Venter J.C."/>
            <person name="Fraser C.M."/>
            <person name="Kaneko T."/>
            <person name="Nakamura Y."/>
            <person name="Sato S."/>
            <person name="Kato T."/>
            <person name="Asamizu E."/>
            <person name="Sasamoto S."/>
            <person name="Kimura T."/>
            <person name="Idesawa K."/>
            <person name="Kawashima K."/>
            <person name="Kishida Y."/>
            <person name="Kiyokawa C."/>
            <person name="Kohara M."/>
            <person name="Matsumoto M."/>
            <person name="Matsuno A."/>
            <person name="Muraki A."/>
            <person name="Nakayama S."/>
            <person name="Nakazaki N."/>
            <person name="Shinpo S."/>
            <person name="Takeuchi C."/>
            <person name="Wada T."/>
            <person name="Watanabe A."/>
            <person name="Yamada M."/>
            <person name="Yasuda M."/>
            <person name="Tabata S."/>
        </authorList>
    </citation>
    <scope>NUCLEOTIDE SEQUENCE [LARGE SCALE GENOMIC DNA]</scope>
    <source>
        <strain>cv. Columbia</strain>
    </source>
</reference>
<reference key="3">
    <citation type="journal article" date="2017" name="Plant J.">
        <title>Araport11: a complete reannotation of the Arabidopsis thaliana reference genome.</title>
        <authorList>
            <person name="Cheng C.Y."/>
            <person name="Krishnakumar V."/>
            <person name="Chan A.P."/>
            <person name="Thibaud-Nissen F."/>
            <person name="Schobel S."/>
            <person name="Town C.D."/>
        </authorList>
    </citation>
    <scope>GENOME REANNOTATION</scope>
    <source>
        <strain>cv. Columbia</strain>
    </source>
</reference>
<gene>
    <name type="ordered locus">At3g05520</name>
    <name type="ORF">F22F7.3</name>
</gene>
<name>CAPZA_ARATH</name>
<protein>
    <recommendedName>
        <fullName>F-actin-capping protein subunit alpha</fullName>
    </recommendedName>
    <alternativeName>
        <fullName>CapZ alpha</fullName>
    </alternativeName>
</protein>
<evidence type="ECO:0000250" key="1"/>
<evidence type="ECO:0000305" key="2"/>
<comment type="function">
    <text evidence="1">F-actin-capping proteins bind in a Ca(2+)-independent manner to the fast growing ends of actin filaments (barbed end) thereby blocking the exchange of subunits at these ends. Unlike other capping proteins (such as gelsolin and severin), these proteins do not sever actin filaments (By similarity).</text>
</comment>
<comment type="subunit">
    <text evidence="1">Component of the F-actin capping complex, composed of a heterodimer of an alpha and a beta subunit.</text>
</comment>
<comment type="alternative products">
    <event type="alternative splicing"/>
    <isoform>
        <id>O82631-1</id>
        <name>1</name>
        <sequence type="displayed"/>
    </isoform>
    <text>A number of isoforms are produced. According to EST sequences.</text>
</comment>
<comment type="similarity">
    <text evidence="2">Belongs to the F-actin-capping protein alpha subunit family.</text>
</comment>
<feature type="chain" id="PRO_0000208640" description="F-actin-capping protein subunit alpha">
    <location>
        <begin position="1"/>
        <end position="308"/>
    </location>
</feature>
<feature type="sequence conflict" description="In Ref. 1; CAA05054." evidence="2" ref="1">
    <original>N</original>
    <variation>T</variation>
    <location>
        <position position="160"/>
    </location>
</feature>